<accession>P9WNV3</accession>
<accession>L0T5C5</accession>
<accession>O05865</accession>
<accession>P71571</accession>
<name>LIGD_MYCTU</name>
<sequence>MGSASEQRVTLTNADKVLYPATGTTKSDIFDYYAGVAEVMLGHIAGRPATRKRWPNGVDQPAFFEKQLALSAPPWLSRATVAHRSGTTTYPIIDSATGLAWIAQQAALEVHVPQWRFVAEPGSGELNPGPATRLVFDLDPGEGVMMAQLAEVARAVRDLLADIGLVTFPVTSGSKGLHLYTPLDEPVSSRGATVLAKRVAQRLEQAMPALVTSTMTKSLRAGKVFVDWSQNSGSKTTIAPYSLRGRTHPTVAAPRTWAELDDPALRQLSYDEVLTRIARDGDLLERLDADAPVADRLTRYRRMRDASKTPEPIPTAKPVTGDGNTFVIQEHHARRPHYDFRLECDGVLVSWAVPKNLPDNTSVNHLAIHTEDHPLEYATFEGAIPSGEYGAGKVIIWDSGTYDTEKFHDDPHTGEVIVNLHGGRISGRYALIRTNGDRWLAHRLKNQKDQKVFEFDNLAPMLATHGTVAGLKASQWAFEGKWDGYRLLVEADHGAVRLRSRSGRDVTAEYPQLRALAEDLADHHVVLDGEAVVLDSSGVPSFSQMQNRGRDTRVEFWAFDLLYLDGRALLGTRYQDRRKLLETLANATSLTVPELLPGDGAQAFACSRKHGWEGVIAKRRDSRYQPGRRCASWVKDKHWNTQEVVIGGWRAGEGGRSSGVGSLLMGIPGPGGLQFAGRVGTGLSERELANLKEMLAPLHTDESPFDVPLPARDAKGITYVKPALVAEVRYSEWTPEGRLRQSSWRGLRPDKKPSEVVRE</sequence>
<comment type="function">
    <text evidence="5 9 10 11">With Ku forms a non-homologous end joining (NHEJ) repair enzyme which repairs DNA double-strand breaks (DSB) with reduced fidelity. Recognizes, processes and reseals DSBs, including repairs on incompatible DSB which require 3'-resection, gap filling and ligation. Anneals the 3' overhanging strands from opposing breaks to form a gapped intermediate, which then can be extended in trans by using the termini as primers for extension of the annealed break. Binds to the recessed 5'-phosphate moiety of the downstream DNA strand forming a stable synaptic complex even when the 3'-protruding ends of the template DNA strands are not complementary. Has numerous activities; gap filling copies the template strand, and prefers a 5'-phosphate in the gap and rNTPS (PubMed:17174332, PubMed:17947582), DNA-directed DNA or RNA polymerase on 5'-overhangs, terminal transferase (extending ssDNA or blunt dsDNA in a non-templated fashion, preferentially with rNTPs), DNA-dependent RNA primase (synthesizes short RNAs on unprimed closed ssDNA) and 3'- to 5'-exonuclease on ssDNA (PubMed:15499016). Isolated Pol domain (and presumably the holoenzyme) is able to form complexes between 2 noncompatible protruding 3'-ends DNA ends via microhomologous DNA strands, in a end-bridging function to which it adds a templated nucleotide (PubMed:17947582). Minimal primer length is 2 nucleotides (PubMed:21255731).</text>
</comment>
<comment type="function">
    <text>The preference of the polymerase domain for rNTPs over dNTPs may be advantageous in dormant cells, where the dNTP pool is limiting.</text>
</comment>
<comment type="function">
    <text>In conjunction with endogenous or Mycobacterium phage Omega Ku (AC Q853W0) can reconstitute NHEJ in Saccharomyces cerevisiae.</text>
</comment>
<comment type="catalytic activity">
    <reaction evidence="3 7 8">
        <text>ATP + (deoxyribonucleotide)n-3'-hydroxyl + 5'-phospho-(deoxyribonucleotide)m = (deoxyribonucleotide)n+m + AMP + diphosphate.</text>
        <dbReference type="EC" id="6.5.1.1"/>
    </reaction>
</comment>
<comment type="cofactor">
    <cofactor evidence="15 16 17 18 19">
        <name>Mn(2+)</name>
        <dbReference type="ChEBI" id="CHEBI:29035"/>
    </cofactor>
    <text evidence="15 16 17 18 19">Binds 4 Mn(2+); 2 Mn(2+) for polymerase/primase activity, 1 each for 3-phosphoesterase and ligase.</text>
</comment>
<comment type="activity regulation">
    <text evidence="3 7">The polymerase, exonuclease and ligase activities are stimulated by Ku. Polymerase activity is inhibited by EDTA.</text>
</comment>
<comment type="subunit">
    <text evidence="3 4 5 6 7 8 9 10 12 13">Monomer. Component of the NHEJ repair enzyme with mKu. Interacts with Ku in the absence of DSB via the Pol domain. In structures of the Pol domain with template DNA 2 Pol domains are bound to microhomologous DNA complexes to form an end-bridging complex. Probably interacts with Mycobacterium phage Omega and Corndog Ku homologs (AC Q853W0, AC Q856K7). Interacts with Sir2; may form a trimeric complex with LigD during NHEJ.</text>
</comment>
<comment type="domain">
    <text evidence="6 7">The N-terminal Mn(2+)-dependent polymerase/primase domain (Pol) functions as an independent domain, binds DNA, is sufficient for DNA-directed and non-DNA-directed DNA synthesis (PubMed:15778718) and interacts with Ku (PubMed:16023671).</text>
</comment>
<comment type="domain">
    <text evidence="5 7">The central 3'-phosphoesterase domain (PE) has exonuclease activity probably constituted of 3'-ribonuclease and 3'-phosphatase activity (PubMed:15499016). It does not function as an independent domain (PubMed:16023671).</text>
</comment>
<comment type="domain">
    <text evidence="4 7">The C-terminal ligase domain (Lig) binds dsDNA and functions as an independent domain (PubMed:14985346, PubMed:16023671).</text>
</comment>
<comment type="disruption phenotype">
    <text evidence="4">Not essential for growth, 80% reduction in NHEJ (in strain Erdman).</text>
</comment>
<comment type="miscellaneous">
    <text>LigD has variable architecture; domain order can be permutated, domains can be independently encoded, while some bacteria lack the 3'-phosphoesterase domain entirely.</text>
</comment>
<comment type="miscellaneous">
    <text>It is not clear whether there is a 5- to 3'-exonuclease activity associated with the enzyme.</text>
</comment>
<comment type="similarity">
    <text evidence="14">In the N-terminal section; belongs to the LigD polymerase family.</text>
</comment>
<comment type="similarity">
    <text evidence="14">In the central section; belongs to the LigD 3'-phosphoesterase family.</text>
</comment>
<comment type="similarity">
    <text evidence="14">In the C-terminal section; belongs to the ATP-dependent DNA ligase family.</text>
</comment>
<reference key="1">
    <citation type="journal article" date="1998" name="Nature">
        <title>Deciphering the biology of Mycobacterium tuberculosis from the complete genome sequence.</title>
        <authorList>
            <person name="Cole S.T."/>
            <person name="Brosch R."/>
            <person name="Parkhill J."/>
            <person name="Garnier T."/>
            <person name="Churcher C.M."/>
            <person name="Harris D.E."/>
            <person name="Gordon S.V."/>
            <person name="Eiglmeier K."/>
            <person name="Gas S."/>
            <person name="Barry C.E. III"/>
            <person name="Tekaia F."/>
            <person name="Badcock K."/>
            <person name="Basham D."/>
            <person name="Brown D."/>
            <person name="Chillingworth T."/>
            <person name="Connor R."/>
            <person name="Davies R.M."/>
            <person name="Devlin K."/>
            <person name="Feltwell T."/>
            <person name="Gentles S."/>
            <person name="Hamlin N."/>
            <person name="Holroyd S."/>
            <person name="Hornsby T."/>
            <person name="Jagels K."/>
            <person name="Krogh A."/>
            <person name="McLean J."/>
            <person name="Moule S."/>
            <person name="Murphy L.D."/>
            <person name="Oliver S."/>
            <person name="Osborne J."/>
            <person name="Quail M.A."/>
            <person name="Rajandream M.A."/>
            <person name="Rogers J."/>
            <person name="Rutter S."/>
            <person name="Seeger K."/>
            <person name="Skelton S."/>
            <person name="Squares S."/>
            <person name="Squares R."/>
            <person name="Sulston J.E."/>
            <person name="Taylor K."/>
            <person name="Whitehead S."/>
            <person name="Barrell B.G."/>
        </authorList>
    </citation>
    <scope>NUCLEOTIDE SEQUENCE [LARGE SCALE GENOMIC DNA]</scope>
    <source>
        <strain>ATCC 25618 / H37Rv</strain>
    </source>
</reference>
<reference key="2">
    <citation type="journal article" date="2002" name="Science">
        <title>Identification of a DNA nonhomologous end-joining complex in bacteria.</title>
        <authorList>
            <person name="Weller G.R."/>
            <person name="Kysela B."/>
            <person name="Roy R."/>
            <person name="Tonkin L.M."/>
            <person name="Scanlan E."/>
            <person name="Della M."/>
            <person name="Devine S.K."/>
            <person name="Day J.P."/>
            <person name="Wilkinson A."/>
            <person name="d'Adda di Fagagna F."/>
            <person name="Devine K.M."/>
            <person name="Bowater R.P."/>
            <person name="Jeggo P.A."/>
            <person name="Jackson S.P."/>
            <person name="Doherty A.J."/>
        </authorList>
    </citation>
    <scope>FUNCTION AS A LIGASE</scope>
    <scope>CATALYTIC ACTIVITY</scope>
    <scope>ACTIVITY REGULATION</scope>
    <scope>INTERACTION WITH MKU</scope>
    <scope>SUBUNIT</scope>
    <scope>DNA-BINDING</scope>
    <scope>ACTIVE SITE</scope>
    <scope>MUTAGENESIS OF LYS-481</scope>
    <source>
        <strain>ATCC 25618 / H37Rv</strain>
    </source>
</reference>
<reference key="3">
    <citation type="journal article" date="2004" name="J. Biol. Chem.">
        <title>Biochemical and genetic analysis of the four DNA ligases of mycobacteria.</title>
        <authorList>
            <person name="Gong C."/>
            <person name="Martins A."/>
            <person name="Bongiorno P."/>
            <person name="Glickman M."/>
            <person name="Shuman S."/>
        </authorList>
    </citation>
    <scope>FUNCTION</scope>
    <scope>COFACTOR</scope>
    <scope>SUBUNIT</scope>
    <scope>DOMAIN</scope>
    <scope>DISRUPTION PHENOTYPE</scope>
    <source>
        <strain>ATCC 25618 / H37Rv</strain>
    </source>
</reference>
<reference key="4">
    <citation type="journal article" date="2004" name="Science">
        <title>Mycobacterial Ku and ligase proteins constitute a two-component NHEJ repair machine.</title>
        <authorList>
            <person name="Della M."/>
            <person name="Palmbos P.L."/>
            <person name="Tseng H.M."/>
            <person name="Tonkin L.M."/>
            <person name="Daley J.M."/>
            <person name="Topper L.M."/>
            <person name="Pitcher R.S."/>
            <person name="Tomkinson A.E."/>
            <person name="Wilson T.E."/>
            <person name="Doherty A.J."/>
        </authorList>
    </citation>
    <scope>FUNCTION IN DNA REPAIR</scope>
    <scope>COFACTOR</scope>
    <scope>SUBUNIT</scope>
    <scope>MUTAGENESIS OF 137-ASP--ASP-139 AND HIS-373</scope>
    <source>
        <strain>ATCC 25618 / H37Rv</strain>
    </source>
</reference>
<reference key="5">
    <citation type="journal article" date="2005" name="J. Mol. Biol.">
        <title>Domain structure of a NHEJ DNA repair ligase from Mycobacterium tuberculosis.</title>
        <authorList>
            <person name="Pitcher R.S."/>
            <person name="Tonkin L.M."/>
            <person name="Green A.J."/>
            <person name="Doherty A.J."/>
        </authorList>
    </citation>
    <scope>FUNCTION</scope>
    <scope>CATALYTIC ACTIVITY</scope>
    <scope>ACTIVITY REGULATION</scope>
    <scope>INTERACTION WITH MKU</scope>
    <scope>SUBUNIT</scope>
    <scope>COFACTOR</scope>
    <scope>DOMAIN</scope>
    <scope>DNA-BINDING</scope>
    <scope>MUTAGENESIS OF 137-ASP--ASP-139 AND LYS-481</scope>
    <source>
        <strain>ATCC 25618 / H37Rv</strain>
    </source>
</reference>
<reference key="6">
    <citation type="journal article" date="2005" name="Nat. Struct. Mol. Biol.">
        <title>Mechanism of nonhomologous end-joining in mycobacteria: a low-fidelity repair system driven by Ku, ligase D and ligase C.</title>
        <authorList>
            <person name="Gong C."/>
            <person name="Bongiorno P."/>
            <person name="Martins A."/>
            <person name="Stephanou N.C."/>
            <person name="Zhu H."/>
            <person name="Shuman S."/>
            <person name="Glickman M.S."/>
        </authorList>
    </citation>
    <scope>FUNCTION</scope>
    <scope>INTERACTION WITH KU</scope>
    <scope>DOMAIN</scope>
</reference>
<reference key="7">
    <citation type="journal article" date="2006" name="Mol. Cell">
        <title>Mycobacteriophage exploit NHEJ to facilitate genome circularization.</title>
        <authorList>
            <person name="Pitcher R.S."/>
            <person name="Tonkin L.M."/>
            <person name="Daley J.M."/>
            <person name="Palmbos P.L."/>
            <person name="Green A.J."/>
            <person name="Velting T.L."/>
            <person name="Brzostek A."/>
            <person name="Korycka-Machala M."/>
            <person name="Cresawn S."/>
            <person name="Dziadek J."/>
            <person name="Hatfull G.F."/>
            <person name="Wilson T.E."/>
            <person name="Doherty A.J."/>
        </authorList>
    </citation>
    <scope>FUNCTION</scope>
    <scope>PROBABLE INTERACTION WITH VIRAL KU</scope>
    <source>
        <strain>ATCC 25618 / H37Rv</strain>
    </source>
</reference>
<reference key="8">
    <citation type="journal article" date="2011" name="Mol. Cell. Proteomics">
        <title>Proteogenomic analysis of Mycobacterium tuberculosis by high resolution mass spectrometry.</title>
        <authorList>
            <person name="Kelkar D.S."/>
            <person name="Kumar D."/>
            <person name="Kumar P."/>
            <person name="Balakrishnan L."/>
            <person name="Muthusamy B."/>
            <person name="Yadav A.K."/>
            <person name="Shrivastava P."/>
            <person name="Marimuthu A."/>
            <person name="Anand S."/>
            <person name="Sundaram H."/>
            <person name="Kingsbury R."/>
            <person name="Harsha H.C."/>
            <person name="Nair B."/>
            <person name="Prasad T.S."/>
            <person name="Chauhan D.S."/>
            <person name="Katoch K."/>
            <person name="Katoch V.M."/>
            <person name="Kumar P."/>
            <person name="Chaerkady R."/>
            <person name="Ramachandran S."/>
            <person name="Dash D."/>
            <person name="Pandey A."/>
        </authorList>
    </citation>
    <scope>IDENTIFICATION BY MASS SPECTROMETRY [LARGE SCALE ANALYSIS]</scope>
    <source>
        <strain>ATCC 25618 / H37Rv</strain>
    </source>
</reference>
<reference key="9">
    <citation type="journal article" date="2011" name="PLoS ONE">
        <title>A Sir2-like protein participates in mycobacterial NHEJ.</title>
        <authorList>
            <person name="Li Z."/>
            <person name="Wen J."/>
            <person name="Lin Y."/>
            <person name="Wang S."/>
            <person name="Xue P."/>
            <person name="Zhang Z."/>
            <person name="Zhou Y."/>
            <person name="Wang X."/>
            <person name="Sui L."/>
            <person name="Bi L.J."/>
            <person name="Zhang X.E."/>
        </authorList>
    </citation>
    <scope>INTERACTION WITH SIR2</scope>
    <scope>SUBUNIT</scope>
</reference>
<reference key="10">
    <citation type="journal article" date="2006" name="J. Biol. Chem.">
        <title>Crystal structure and nonhomologous end-joining function of the ligase component of Mycobacterium DNA ligase D.</title>
        <authorList>
            <person name="Akey D."/>
            <person name="Martins A."/>
            <person name="Aniukwu J."/>
            <person name="Glickman M.S."/>
            <person name="Shuman S."/>
            <person name="Berger J.M."/>
        </authorList>
    </citation>
    <scope>X-RAY CRYSTALLOGRAPHY (2.40 ANGSTROMS) OF 452-759 IN COMPLEX WITH DIVALENT CATION</scope>
    <scope>CATALYTIC ACTIVITY FOR LIGASE</scope>
    <scope>ACTIVE SITE</scope>
    <scope>MUTAGENESIS OF LYS-481; ASP-483; GLU-530; GLU-613; LYS-635 AND LYS-637</scope>
    <source>
        <strain>ATCC 25618 / H37Rv</strain>
    </source>
</reference>
<reference key="11">
    <citation type="journal article" date="2007" name="J. Mol. Biol.">
        <title>Structure and function of a mycobacterial NHEJ DNA repair polymerase.</title>
        <authorList>
            <person name="Pitcher R.S."/>
            <person name="Brissett N.C."/>
            <person name="Picher A.J."/>
            <person name="Andrade P."/>
            <person name="Juarez R."/>
            <person name="Thompson D."/>
            <person name="Fox G.C."/>
            <person name="Blanco L."/>
            <person name="Doherty A.J."/>
        </authorList>
    </citation>
    <scope>X-RAY CRYSTALLOGRAPHY (1.65 ANGSTROMS) OF 1-300 OF APOENZYME AND IN COMPLEX WITH MANGANESE AND SUBSTRATE</scope>
    <scope>FUNCTION</scope>
    <scope>COFACTOR</scope>
    <scope>DNA-BINDING</scope>
</reference>
<reference key="12">
    <citation type="journal article" date="2007" name="Science">
        <title>Structure of a NHEJ polymerase-mediated DNA synaptic complex.</title>
        <authorList>
            <person name="Brissett N.C."/>
            <person name="Pitcher R.S."/>
            <person name="Juarez R."/>
            <person name="Picher A.J."/>
            <person name="Green A.J."/>
            <person name="Dafforn T.R."/>
            <person name="Fox G.C."/>
            <person name="Blanco L."/>
            <person name="Doherty A.J."/>
        </authorList>
    </citation>
    <scope>X-RAY CRYSTALLOGRAPHY (2.40 ANGSTROMS) OF 1-300 IN COMPLEX WITH DNA</scope>
    <scope>FUNCTION</scope>
    <scope>SUBUNIT</scope>
    <scope>DOMAIN</scope>
    <scope>DNA-BINDING</scope>
    <scope>MUTAGENESIS OF LYS-16 AND 83-HIS--SER-85</scope>
</reference>
<reference key="13">
    <citation type="journal article" date="2011" name="Mol. Cell">
        <title>Structure of a preternary complex involving a prokaryotic NHEJ DNA polymerase.</title>
        <authorList>
            <person name="Brissett N.C."/>
            <person name="Martin M.J."/>
            <person name="Pitcher R.S."/>
            <person name="Bianchi J."/>
            <person name="Juarez R."/>
            <person name="Green A.J."/>
            <person name="Fox G.C."/>
            <person name="Blanco L."/>
            <person name="Doherty A.J."/>
        </authorList>
    </citation>
    <scope>X-RAY CRYSTALLOGRAPHY (3.10 ANGSTROMS) OF 1-300 IN PRETERNARY COMPLEX WITH DNA</scope>
    <scope>SUBSTRATE AND MANGANESE</scope>
    <scope>COFACTOR</scope>
    <scope>DNA-BINDING</scope>
    <scope>MUTAGENESIS OF ARG-220</scope>
</reference>
<reference key="14">
    <citation type="journal article" date="2013" name="Cell Rep.">
        <title>Molecular basis for DNA double-strand break annealing and primer extension by an NHEJ DNA polymerase.</title>
        <authorList>
            <person name="Brissett N.C."/>
            <person name="Martin M.J."/>
            <person name="Bartlett E.J."/>
            <person name="Bianchi J."/>
            <person name="Blanco L."/>
            <person name="Doherty A.J."/>
        </authorList>
    </citation>
    <scope>X-RAY CRYSTALLOGRAPHY (2.40 ANGSTROMS) OF 1-300 IN COMPLEX WITH DNA</scope>
    <scope>REACTION MECHANISM</scope>
    <scope>DNA-BINDING</scope>
    <scope>MUTAGENESIS OF ARG-53; PHE-63; PHE-64; 83-HIS--SER-85; LYS-217; GLN-230 AND LYS-235</scope>
</reference>
<proteinExistence type="evidence at protein level"/>
<organism>
    <name type="scientific">Mycobacterium tuberculosis (strain ATCC 25618 / H37Rv)</name>
    <dbReference type="NCBI Taxonomy" id="83332"/>
    <lineage>
        <taxon>Bacteria</taxon>
        <taxon>Bacillati</taxon>
        <taxon>Actinomycetota</taxon>
        <taxon>Actinomycetes</taxon>
        <taxon>Mycobacteriales</taxon>
        <taxon>Mycobacteriaceae</taxon>
        <taxon>Mycobacterium</taxon>
        <taxon>Mycobacterium tuberculosis complex</taxon>
    </lineage>
</organism>
<keyword id="KW-0002">3D-structure</keyword>
<keyword id="KW-0067">ATP-binding</keyword>
<keyword id="KW-0227">DNA damage</keyword>
<keyword id="KW-0233">DNA recombination</keyword>
<keyword id="KW-0234">DNA repair</keyword>
<keyword id="KW-0238">DNA-binding</keyword>
<keyword id="KW-0239">DNA-directed DNA polymerase</keyword>
<keyword id="KW-0269">Exonuclease</keyword>
<keyword id="KW-0945">Host-virus interaction</keyword>
<keyword id="KW-0378">Hydrolase</keyword>
<keyword id="KW-0436">Ligase</keyword>
<keyword id="KW-0464">Manganese</keyword>
<keyword id="KW-0479">Metal-binding</keyword>
<keyword id="KW-0511">Multifunctional enzyme</keyword>
<keyword id="KW-0540">Nuclease</keyword>
<keyword id="KW-0547">Nucleotide-binding</keyword>
<keyword id="KW-0548">Nucleotidyltransferase</keyword>
<keyword id="KW-1185">Reference proteome</keyword>
<keyword id="KW-0808">Transferase</keyword>
<feature type="chain" id="PRO_0000059627" description="Multifunctional non-homologous end joining DNA repair protein LigD">
    <location>
        <begin position="1"/>
        <end position="759"/>
    </location>
</feature>
<feature type="DNA-binding region" description="Interaction with target DNA">
    <location>
        <begin position="13"/>
        <end position="16"/>
    </location>
</feature>
<feature type="DNA-binding region" description="Interaction with target DNA">
    <location>
        <position position="26"/>
    </location>
</feature>
<feature type="DNA-binding region" description="Interaction with target DNA">
    <location>
        <begin position="53"/>
        <end position="55"/>
    </location>
</feature>
<feature type="DNA-binding region" description="Interaction with target DNA">
    <location>
        <begin position="63"/>
        <end position="67"/>
    </location>
</feature>
<feature type="DNA-binding region" description="Interaction with target DNA">
    <location>
        <position position="71"/>
    </location>
</feature>
<feature type="DNA-binding region" description="Interaction with target DNA">
    <location>
        <begin position="83"/>
        <end position="88"/>
    </location>
</feature>
<feature type="DNA-binding region" description="Interaction with target DNA">
    <location>
        <position position="104"/>
    </location>
</feature>
<feature type="DNA-binding region" description="Interaction with target DNA">
    <location>
        <position position="137"/>
    </location>
</feature>
<feature type="DNA-binding region" description="Interaction with target DNA">
    <location>
        <begin position="215"/>
        <end position="220"/>
    </location>
</feature>
<feature type="DNA-binding region" description="Interaction with target DNA">
    <location>
        <begin position="227"/>
        <end position="235"/>
    </location>
</feature>
<feature type="region of interest" description="Not required for ligase activity">
    <location>
        <begin position="1"/>
        <end position="411"/>
    </location>
</feature>
<feature type="region of interest" description="DNA repair polymerase domain (Pol); interacts with Ku">
    <location>
        <begin position="9"/>
        <end position="261"/>
    </location>
</feature>
<feature type="region of interest" description="3-phosphoesterase domain (PE)">
    <location>
        <begin position="297"/>
        <end position="446"/>
    </location>
</feature>
<feature type="region of interest" description="Ligase domain (Lig)">
    <location>
        <begin position="460"/>
        <end position="757"/>
    </location>
</feature>
<feature type="region of interest" description="Disordered" evidence="2">
    <location>
        <begin position="740"/>
        <end position="759"/>
    </location>
</feature>
<feature type="compositionally biased region" description="Basic and acidic residues" evidence="2">
    <location>
        <begin position="747"/>
        <end position="759"/>
    </location>
</feature>
<feature type="active site" description="N6-AMP-lysine intermediate; for ligase activity" evidence="3 8">
    <location>
        <position position="481"/>
    </location>
</feature>
<feature type="binding site" evidence="9">
    <location>
        <position position="52"/>
    </location>
    <ligand>
        <name>substrate</name>
        <note>for polymerase activity</note>
    </ligand>
</feature>
<feature type="binding site" evidence="9">
    <location>
        <position position="111"/>
    </location>
    <ligand>
        <name>substrate</name>
        <note>for polymerase activity</note>
    </ligand>
</feature>
<feature type="binding site" evidence="9">
    <location>
        <begin position="137"/>
        <end position="139"/>
    </location>
    <ligand>
        <name>substrate</name>
        <note>for polymerase activity</note>
    </ligand>
</feature>
<feature type="binding site" evidence="9">
    <location>
        <position position="137"/>
    </location>
    <ligand>
        <name>Mn(2+)</name>
        <dbReference type="ChEBI" id="CHEBI:29035"/>
        <label>1</label>
    </ligand>
</feature>
<feature type="binding site" evidence="9">
    <location>
        <position position="137"/>
    </location>
    <ligand>
        <name>Mn(2+)</name>
        <dbReference type="ChEBI" id="CHEBI:29035"/>
        <label>2</label>
    </ligand>
</feature>
<feature type="binding site" evidence="9">
    <location>
        <position position="139"/>
    </location>
    <ligand>
        <name>Mn(2+)</name>
        <dbReference type="ChEBI" id="CHEBI:29035"/>
        <label>1</label>
    </ligand>
</feature>
<feature type="binding site" evidence="9">
    <location>
        <position position="139"/>
    </location>
    <ligand>
        <name>Mn(2+)</name>
        <dbReference type="ChEBI" id="CHEBI:29035"/>
        <label>2</label>
    </ligand>
</feature>
<feature type="binding site" evidence="9">
    <location>
        <begin position="172"/>
        <end position="178"/>
    </location>
    <ligand>
        <name>substrate</name>
        <note>for polymerase activity</note>
    </ligand>
</feature>
<feature type="binding site" evidence="9">
    <location>
        <position position="227"/>
    </location>
    <ligand>
        <name>Mn(2+)</name>
        <dbReference type="ChEBI" id="CHEBI:29035"/>
        <label>2</label>
    </ligand>
</feature>
<feature type="binding site" evidence="9">
    <location>
        <position position="230"/>
    </location>
    <ligand>
        <name>substrate</name>
        <note>for polymerase activity</note>
    </ligand>
</feature>
<feature type="binding site" evidence="9">
    <location>
        <position position="236"/>
    </location>
    <ligand>
        <name>substrate</name>
        <note>for polymerase activity</note>
    </ligand>
</feature>
<feature type="binding site" evidence="9">
    <location>
        <position position="244"/>
    </location>
    <ligand>
        <name>substrate</name>
        <note>for polymerase activity</note>
    </ligand>
</feature>
<feature type="binding site" evidence="1">
    <location>
        <position position="331"/>
    </location>
    <ligand>
        <name>Mn(2+)</name>
        <dbReference type="ChEBI" id="CHEBI:29035"/>
        <label>3</label>
        <note>catalytic; for 3'-phosphoesterase activity</note>
    </ligand>
</feature>
<feature type="binding site" evidence="1">
    <location>
        <position position="337"/>
    </location>
    <ligand>
        <name>Mn(2+)</name>
        <dbReference type="ChEBI" id="CHEBI:29035"/>
        <label>3</label>
        <note>catalytic; for 3'-phosphoesterase activity</note>
    </ligand>
</feature>
<feature type="binding site" evidence="1">
    <location>
        <position position="339"/>
    </location>
    <ligand>
        <name>Mn(2+)</name>
        <dbReference type="ChEBI" id="CHEBI:29035"/>
        <label>3</label>
        <note>catalytic; for 3'-phosphoesterase activity</note>
    </ligand>
</feature>
<feature type="binding site" evidence="18">
    <location>
        <position position="483"/>
    </location>
    <ligand>
        <name>Mn(2+)</name>
        <dbReference type="ChEBI" id="CHEBI:29035"/>
        <label>4</label>
    </ligand>
</feature>
<feature type="binding site" evidence="18">
    <location>
        <position position="613"/>
    </location>
    <ligand>
        <name>Mn(2+)</name>
        <dbReference type="ChEBI" id="CHEBI:29035"/>
        <label>4</label>
    </ligand>
</feature>
<feature type="site" description="Transition state stabilizer; for 3'-phosphoesterase activity" evidence="1">
    <location>
        <position position="373"/>
    </location>
</feature>
<feature type="mutagenesis site" description="Loss of DNA-binding, no polymerase activity, no effect of gap-filling (in Pol domain)." evidence="10">
    <original>K</original>
    <variation>A</variation>
    <location>
        <position position="16"/>
    </location>
</feature>
<feature type="mutagenesis site" description="On substrate with 5'-phosphate, 1 base pair (bp) complementarity and 1 nucleotide (nt) gap, greatly reduced DNA-binding and gap-filling. Barely detectable activity on substrate with high complementarity and 3'-overhang (in Pol domain)." evidence="13">
    <original>R</original>
    <variation>A</variation>
    <location>
        <position position="53"/>
    </location>
</feature>
<feature type="mutagenesis site" description="On substrate with 5'-phosphate, 1 bp complementarity and 1 nt gap, greatly reduced DNA-binding and gap-filling. No activity on substrate with high complementarity and 3'-overhang (in Pol domain)." evidence="13">
    <original>F</original>
    <variation>A</variation>
    <location>
        <position position="63"/>
    </location>
</feature>
<feature type="mutagenesis site" description="On substrate with 5'-phosphate, 1 bp complementarity and 1 nt gap, greatly reduced DNA-binding and gap-filling. Barely detectable activity on substrate with high complementarity and 3'-overhang (in Pol domain)." evidence="13">
    <original>F</original>
    <variation>A</variation>
    <location>
        <position position="64"/>
    </location>
</feature>
<feature type="mutagenesis site" description="Binds DNA, no formation of DNA end-bridging complex, no polymerase activity. Significantly decreased ability to fill in 2 nt gaps (in Pol domain)." evidence="10 13">
    <original>HRS</original>
    <variation>AAA</variation>
    <location>
        <begin position="83"/>
        <end position="85"/>
    </location>
</feature>
<feature type="mutagenesis site" description="Loss of polymerase activities, no DNA repair (in Pol domain)." evidence="5 7">
    <original>DLD</original>
    <variation>ALA</variation>
    <location>
        <begin position="137"/>
        <end position="139"/>
    </location>
</feature>
<feature type="mutagenesis site" description="Better than wild-type DNA-binding and filling on single nt gaps, impaired gap filling on more complicated templates (in Pol domain)." evidence="13">
    <original>K</original>
    <variation>A</variation>
    <location>
        <position position="217"/>
    </location>
</feature>
<feature type="mutagenesis site" description="Binds DNA, no gap-filling (in Pol domain)." evidence="11">
    <original>R</original>
    <variation>A</variation>
    <location>
        <position position="220"/>
    </location>
</feature>
<feature type="mutagenesis site" description="Wild-type filling on single nt gaps, impaired gap filling on more complicated templates (in Pol domain)." evidence="13">
    <original>Q</original>
    <variation>A</variation>
    <location>
        <position position="230"/>
    </location>
</feature>
<feature type="mutagenesis site" description="Wild-type filling on single nt gaps, impaired gap filling on more complicated templates (in Pol domain)." evidence="13">
    <original>K</original>
    <variation>A</variation>
    <location>
        <position position="235"/>
    </location>
</feature>
<feature type="mutagenesis site" description="Loss of exonuclease, no DNA repair." evidence="5">
    <original>H</original>
    <variation>A</variation>
    <location>
        <position position="373"/>
    </location>
</feature>
<feature type="mutagenesis site" description="Loss of adenyltransferase activity, no N6-AMP-lysine formation and loss of ligase activity. No effect on phosphodiester bond formation on pre-adenylated nicked DNA, or on DNA polymerase." evidence="3 7 8">
    <original>K</original>
    <variation>A</variation>
    <location>
        <position position="481"/>
    </location>
</feature>
<feature type="mutagenesis site" description="No ligase of singly nicked dsDNA activity, no N6-AMP-lysine intermediate formed, decreased phosphodiester bond formation on pre-adenylated nicked DNA, no effect on DNA polymerase." evidence="8">
    <original>D</original>
    <variation>A</variation>
    <location>
        <position position="483"/>
    </location>
</feature>
<feature type="mutagenesis site" description="No ligase of singly nicked dsDNA activity, no N6-AMP-lysine intermediate formed, no phosphodiester bond formation on pre-adenylated nicked DNA, no effect on DNA polymerase." evidence="8">
    <original>E</original>
    <variation>A</variation>
    <location>
        <position position="530"/>
    </location>
</feature>
<feature type="mutagenesis site" description="No ligase of singly nicked dsDNA activity, no N6-AMP-lysine intermediate formed, decreased phosphodiester bond formation on pre-adenylated nicked DNA, no effect on DNA polymerase." evidence="8">
    <original>E</original>
    <variation>A</variation>
    <location>
        <position position="613"/>
    </location>
</feature>
<feature type="mutagenesis site" description="20% ligase activity for singly nicked dsDNA, normal N6-AMP-lysine intermediate formed, no effect on phosphodiester bond formation, no effect on DNA polymerase." evidence="8">
    <original>K</original>
    <variation>A</variation>
    <location>
        <position position="635"/>
    </location>
</feature>
<feature type="mutagenesis site" description="No ligase of singly nicked dsDNA activity, 25% N6-AMP-lysine intermediate formed, decreased phosphodiester bond formation, no effect on DNA polymerase." evidence="8">
    <original>K</original>
    <variation>A</variation>
    <location>
        <position position="637"/>
    </location>
</feature>
<feature type="strand" evidence="22">
    <location>
        <begin position="17"/>
        <end position="19"/>
    </location>
</feature>
<feature type="turn" evidence="21">
    <location>
        <begin position="20"/>
        <end position="22"/>
    </location>
</feature>
<feature type="helix" evidence="21">
    <location>
        <begin position="26"/>
        <end position="44"/>
    </location>
</feature>
<feature type="strand" evidence="21">
    <location>
        <begin position="50"/>
        <end position="53"/>
    </location>
</feature>
<feature type="strand" evidence="21">
    <location>
        <begin position="63"/>
        <end position="65"/>
    </location>
</feature>
<feature type="strand" evidence="21">
    <location>
        <begin position="76"/>
        <end position="81"/>
    </location>
</feature>
<feature type="strand" evidence="21">
    <location>
        <begin position="88"/>
        <end position="92"/>
    </location>
</feature>
<feature type="helix" evidence="21">
    <location>
        <begin position="96"/>
        <end position="104"/>
    </location>
</feature>
<feature type="strand" evidence="21">
    <location>
        <begin position="109"/>
        <end position="112"/>
    </location>
</feature>
<feature type="strand" evidence="21">
    <location>
        <begin position="114"/>
        <end position="119"/>
    </location>
</feature>
<feature type="turn" evidence="21">
    <location>
        <begin position="121"/>
        <end position="123"/>
    </location>
</feature>
<feature type="strand" evidence="21">
    <location>
        <begin position="126"/>
        <end position="140"/>
    </location>
</feature>
<feature type="helix" evidence="21">
    <location>
        <begin position="146"/>
        <end position="161"/>
    </location>
</feature>
<feature type="turn" evidence="21">
    <location>
        <begin position="162"/>
        <end position="164"/>
    </location>
</feature>
<feature type="strand" evidence="21">
    <location>
        <begin position="168"/>
        <end position="171"/>
    </location>
</feature>
<feature type="strand" evidence="21">
    <location>
        <begin position="173"/>
        <end position="175"/>
    </location>
</feature>
<feature type="strand" evidence="21">
    <location>
        <begin position="177"/>
        <end position="187"/>
    </location>
</feature>
<feature type="helix" evidence="21">
    <location>
        <begin position="189"/>
        <end position="206"/>
    </location>
</feature>
<feature type="turn" evidence="21">
    <location>
        <begin position="208"/>
        <end position="210"/>
    </location>
</feature>
<feature type="strand" evidence="21">
    <location>
        <begin position="211"/>
        <end position="214"/>
    </location>
</feature>
<feature type="helix" evidence="21">
    <location>
        <begin position="217"/>
        <end position="219"/>
    </location>
</feature>
<feature type="turn" evidence="22">
    <location>
        <begin position="220"/>
        <end position="222"/>
    </location>
</feature>
<feature type="strand" evidence="21">
    <location>
        <begin position="223"/>
        <end position="227"/>
    </location>
</feature>
<feature type="helix" evidence="21">
    <location>
        <begin position="229"/>
        <end position="231"/>
    </location>
</feature>
<feature type="strand" evidence="21">
    <location>
        <begin position="246"/>
        <end position="248"/>
    </location>
</feature>
<feature type="helix" evidence="21">
    <location>
        <begin position="257"/>
        <end position="260"/>
    </location>
</feature>
<feature type="helix" evidence="21">
    <location>
        <begin position="270"/>
        <end position="280"/>
    </location>
</feature>
<feature type="turn" evidence="21">
    <location>
        <begin position="283"/>
        <end position="287"/>
    </location>
</feature>
<feature type="helix" evidence="20">
    <location>
        <begin position="455"/>
        <end position="457"/>
    </location>
</feature>
<feature type="strand" evidence="20">
    <location>
        <begin position="462"/>
        <end position="465"/>
    </location>
</feature>
<feature type="turn" evidence="20">
    <location>
        <begin position="473"/>
        <end position="475"/>
    </location>
</feature>
<feature type="strand" evidence="20">
    <location>
        <begin position="476"/>
        <end position="481"/>
    </location>
</feature>
<feature type="strand" evidence="20">
    <location>
        <begin position="484"/>
        <end position="492"/>
    </location>
</feature>
<feature type="strand" evidence="20">
    <location>
        <begin position="495"/>
        <end position="500"/>
    </location>
</feature>
<feature type="helix" evidence="20">
    <location>
        <begin position="507"/>
        <end position="509"/>
    </location>
</feature>
<feature type="helix" evidence="20">
    <location>
        <begin position="511"/>
        <end position="513"/>
    </location>
</feature>
<feature type="helix" evidence="20">
    <location>
        <begin position="514"/>
        <end position="519"/>
    </location>
</feature>
<feature type="turn" evidence="20">
    <location>
        <begin position="520"/>
        <end position="522"/>
    </location>
</feature>
<feature type="strand" evidence="20">
    <location>
        <begin position="524"/>
        <end position="532"/>
    </location>
</feature>
<feature type="helix" evidence="20">
    <location>
        <begin position="542"/>
        <end position="546"/>
    </location>
</feature>
<feature type="strand" evidence="20">
    <location>
        <begin position="555"/>
        <end position="564"/>
    </location>
</feature>
<feature type="helix" evidence="20">
    <location>
        <begin position="574"/>
        <end position="587"/>
    </location>
</feature>
<feature type="helix" evidence="20">
    <location>
        <begin position="600"/>
        <end position="609"/>
    </location>
</feature>
<feature type="strand" evidence="20">
    <location>
        <begin position="614"/>
        <end position="619"/>
    </location>
</feature>
<feature type="strand" evidence="20">
    <location>
        <begin position="629"/>
        <end position="650"/>
    </location>
</feature>
<feature type="strand" evidence="20">
    <location>
        <begin position="662"/>
        <end position="669"/>
    </location>
</feature>
<feature type="strand" evidence="20">
    <location>
        <begin position="672"/>
        <end position="679"/>
    </location>
</feature>
<feature type="helix" evidence="20">
    <location>
        <begin position="685"/>
        <end position="695"/>
    </location>
</feature>
<feature type="helix" evidence="20">
    <location>
        <begin position="696"/>
        <end position="698"/>
    </location>
</feature>
<feature type="strand" evidence="20">
    <location>
        <begin position="704"/>
        <end position="707"/>
    </location>
</feature>
<feature type="helix" evidence="20">
    <location>
        <begin position="711"/>
        <end position="714"/>
    </location>
</feature>
<feature type="strand" evidence="20">
    <location>
        <begin position="717"/>
        <end position="720"/>
    </location>
</feature>
<feature type="strand" evidence="20">
    <location>
        <begin position="725"/>
        <end position="731"/>
    </location>
</feature>
<feature type="strand" evidence="20">
    <location>
        <begin position="743"/>
        <end position="747"/>
    </location>
</feature>
<feature type="helix" evidence="20">
    <location>
        <begin position="753"/>
        <end position="755"/>
    </location>
</feature>
<protein>
    <recommendedName>
        <fullName>Multifunctional non-homologous end joining DNA repair protein LigD</fullName>
        <shortName>NHEJ DNA repair protein D</shortName>
    </recommendedName>
    <alternativeName>
        <fullName>Mt-Lig</fullName>
    </alternativeName>
    <alternativeName>
        <fullName>NHEJ DNA polymerase</fullName>
    </alternativeName>
    <domain>
        <recommendedName>
            <fullName>DNA repair polymerase</fullName>
            <shortName>Pol</shortName>
        </recommendedName>
        <alternativeName>
            <fullName>Polymerase/primase</fullName>
        </alternativeName>
    </domain>
    <domain>
        <recommendedName>
            <fullName>3'-phosphoesterase</fullName>
            <shortName>3'-ribonuclease/3'-phosphatase</shortName>
            <shortName>PE</shortName>
        </recommendedName>
    </domain>
    <domain>
        <recommendedName>
            <fullName>DNA ligase</fullName>
            <shortName>Lig</shortName>
            <ecNumber evidence="3 7 8">6.5.1.1</ecNumber>
        </recommendedName>
        <alternativeName>
            <fullName>Polydeoxyribonucleotide synthase [ATP]</fullName>
        </alternativeName>
    </domain>
</protein>
<dbReference type="EC" id="6.5.1.1" evidence="3 7 8"/>
<dbReference type="EMBL" id="AL123456">
    <property type="protein sequence ID" value="CCP43686.1"/>
    <property type="molecule type" value="Genomic_DNA"/>
</dbReference>
<dbReference type="PIR" id="B70585">
    <property type="entry name" value="B70585"/>
</dbReference>
<dbReference type="RefSeq" id="NP_215453.1">
    <property type="nucleotide sequence ID" value="NC_000962.3"/>
</dbReference>
<dbReference type="RefSeq" id="WP_003911307.1">
    <property type="nucleotide sequence ID" value="NZ_NVQJ01000001.1"/>
</dbReference>
<dbReference type="PDB" id="1VS0">
    <property type="method" value="X-ray"/>
    <property type="resolution" value="2.40 A"/>
    <property type="chains" value="A/B=452-759"/>
</dbReference>
<dbReference type="PDB" id="2IRU">
    <property type="method" value="X-ray"/>
    <property type="resolution" value="1.65 A"/>
    <property type="chains" value="A/B=1-300"/>
</dbReference>
<dbReference type="PDB" id="2IRX">
    <property type="method" value="X-ray"/>
    <property type="resolution" value="1.80 A"/>
    <property type="chains" value="A=1-300"/>
</dbReference>
<dbReference type="PDB" id="2IRY">
    <property type="method" value="X-ray"/>
    <property type="resolution" value="1.78 A"/>
    <property type="chains" value="A/B=1-300"/>
</dbReference>
<dbReference type="PDB" id="2R9L">
    <property type="method" value="X-ray"/>
    <property type="resolution" value="2.40 A"/>
    <property type="chains" value="A/B=1-300"/>
</dbReference>
<dbReference type="PDB" id="3PKY">
    <property type="method" value="X-ray"/>
    <property type="resolution" value="3.10 A"/>
    <property type="chains" value="A/B=1-300"/>
</dbReference>
<dbReference type="PDB" id="4MKY">
    <property type="method" value="X-ray"/>
    <property type="resolution" value="2.40 A"/>
    <property type="chains" value="A/B/C/D=1-300"/>
</dbReference>
<dbReference type="PDBsum" id="1VS0"/>
<dbReference type="PDBsum" id="2IRU"/>
<dbReference type="PDBsum" id="2IRX"/>
<dbReference type="PDBsum" id="2IRY"/>
<dbReference type="PDBsum" id="2R9L"/>
<dbReference type="PDBsum" id="3PKY"/>
<dbReference type="PDBsum" id="4MKY"/>
<dbReference type="SMR" id="P9WNV3"/>
<dbReference type="FunCoup" id="P9WNV3">
    <property type="interactions" value="1"/>
</dbReference>
<dbReference type="STRING" id="83332.Rv0938"/>
<dbReference type="PaxDb" id="83332-Rv0938"/>
<dbReference type="DNASU" id="885561"/>
<dbReference type="GeneID" id="885561"/>
<dbReference type="KEGG" id="mtu:Rv0938"/>
<dbReference type="KEGG" id="mtv:RVBD_0938"/>
<dbReference type="TubercuList" id="Rv0938"/>
<dbReference type="eggNOG" id="COG1793">
    <property type="taxonomic scope" value="Bacteria"/>
</dbReference>
<dbReference type="eggNOG" id="COG3285">
    <property type="taxonomic scope" value="Bacteria"/>
</dbReference>
<dbReference type="InParanoid" id="P9WNV3"/>
<dbReference type="OrthoDB" id="9802472at2"/>
<dbReference type="PhylomeDB" id="P9WNV3"/>
<dbReference type="EvolutionaryTrace" id="P9WNV3"/>
<dbReference type="Proteomes" id="UP000001584">
    <property type="component" value="Chromosome"/>
</dbReference>
<dbReference type="GO" id="GO:0005886">
    <property type="term" value="C:plasma membrane"/>
    <property type="evidence" value="ECO:0007005"/>
    <property type="project" value="MTBBASE"/>
</dbReference>
<dbReference type="GO" id="GO:0005524">
    <property type="term" value="F:ATP binding"/>
    <property type="evidence" value="ECO:0000314"/>
    <property type="project" value="MTBBASE"/>
</dbReference>
<dbReference type="GO" id="GO:0003677">
    <property type="term" value="F:DNA binding"/>
    <property type="evidence" value="ECO:0000314"/>
    <property type="project" value="UniProtKB"/>
</dbReference>
<dbReference type="GO" id="GO:0003910">
    <property type="term" value="F:DNA ligase (ATP) activity"/>
    <property type="evidence" value="ECO:0000314"/>
    <property type="project" value="UniProtKB"/>
</dbReference>
<dbReference type="GO" id="GO:0003909">
    <property type="term" value="F:DNA ligase activity"/>
    <property type="evidence" value="ECO:0000314"/>
    <property type="project" value="UniProtKB"/>
</dbReference>
<dbReference type="GO" id="GO:0003887">
    <property type="term" value="F:DNA-directed DNA polymerase activity"/>
    <property type="evidence" value="ECO:0000314"/>
    <property type="project" value="MTBBASE"/>
</dbReference>
<dbReference type="GO" id="GO:0003899">
    <property type="term" value="F:DNA-directed RNA polymerase activity"/>
    <property type="evidence" value="ECO:0000314"/>
    <property type="project" value="MTBBASE"/>
</dbReference>
<dbReference type="GO" id="GO:0000287">
    <property type="term" value="F:magnesium ion binding"/>
    <property type="evidence" value="ECO:0000314"/>
    <property type="project" value="MTBBASE"/>
</dbReference>
<dbReference type="GO" id="GO:0030145">
    <property type="term" value="F:manganese ion binding"/>
    <property type="evidence" value="ECO:0000314"/>
    <property type="project" value="UniProtKB"/>
</dbReference>
<dbReference type="GO" id="GO:0046872">
    <property type="term" value="F:metal ion binding"/>
    <property type="evidence" value="ECO:0000314"/>
    <property type="project" value="UniProtKB"/>
</dbReference>
<dbReference type="GO" id="GO:0000166">
    <property type="term" value="F:nucleotide binding"/>
    <property type="evidence" value="ECO:0000314"/>
    <property type="project" value="UniProtKB"/>
</dbReference>
<dbReference type="GO" id="GO:0032553">
    <property type="term" value="F:ribonucleotide binding"/>
    <property type="evidence" value="ECO:0000314"/>
    <property type="project" value="UniProtKB"/>
</dbReference>
<dbReference type="GO" id="GO:0008310">
    <property type="term" value="F:single-stranded DNA 3'-5' DNA exonuclease activity"/>
    <property type="evidence" value="ECO:0000314"/>
    <property type="project" value="MTBBASE"/>
</dbReference>
<dbReference type="GO" id="GO:0006310">
    <property type="term" value="P:DNA recombination"/>
    <property type="evidence" value="ECO:0007669"/>
    <property type="project" value="UniProtKB-KW"/>
</dbReference>
<dbReference type="GO" id="GO:0006269">
    <property type="term" value="P:DNA replication, synthesis of primer"/>
    <property type="evidence" value="ECO:0000314"/>
    <property type="project" value="MTBBASE"/>
</dbReference>
<dbReference type="GO" id="GO:0006302">
    <property type="term" value="P:double-strand break repair"/>
    <property type="evidence" value="ECO:0000314"/>
    <property type="project" value="UniProtKB"/>
</dbReference>
<dbReference type="GO" id="GO:0006303">
    <property type="term" value="P:double-strand break repair via nonhomologous end joining"/>
    <property type="evidence" value="ECO:0000314"/>
    <property type="project" value="UniProtKB"/>
</dbReference>
<dbReference type="CDD" id="cd07906">
    <property type="entry name" value="Adenylation_DNA_ligase_LigD_LigC"/>
    <property type="match status" value="1"/>
</dbReference>
<dbReference type="CDD" id="cd04863">
    <property type="entry name" value="MtLigD_Pol_like"/>
    <property type="match status" value="1"/>
</dbReference>
<dbReference type="CDD" id="cd07971">
    <property type="entry name" value="OBF_DNA_ligase_LigD"/>
    <property type="match status" value="1"/>
</dbReference>
<dbReference type="FunFam" id="3.30.470.30:FF:000031">
    <property type="entry name" value="Multifunctional non-homologous end joining protein LigD"/>
    <property type="match status" value="1"/>
</dbReference>
<dbReference type="FunFam" id="3.90.920.10:FF:000007">
    <property type="entry name" value="Possible ATP dependant DNA ligase"/>
    <property type="match status" value="1"/>
</dbReference>
<dbReference type="FunFam" id="2.40.50.140:FF:000292">
    <property type="entry name" value="Probable ATP-dependent DNA ligase"/>
    <property type="match status" value="1"/>
</dbReference>
<dbReference type="Gene3D" id="3.30.1490.70">
    <property type="match status" value="1"/>
</dbReference>
<dbReference type="Gene3D" id="3.30.470.30">
    <property type="entry name" value="DNA ligase/mRNA capping enzyme"/>
    <property type="match status" value="1"/>
</dbReference>
<dbReference type="Gene3D" id="3.90.920.10">
    <property type="entry name" value="DNA primase, PRIM domain"/>
    <property type="match status" value="1"/>
</dbReference>
<dbReference type="Gene3D" id="2.40.50.140">
    <property type="entry name" value="Nucleic acid-binding proteins"/>
    <property type="match status" value="1"/>
</dbReference>
<dbReference type="InterPro" id="IPR012309">
    <property type="entry name" value="DNA_ligase_ATP-dep_C"/>
</dbReference>
<dbReference type="InterPro" id="IPR012310">
    <property type="entry name" value="DNA_ligase_ATP-dep_cent"/>
</dbReference>
<dbReference type="InterPro" id="IPR014146">
    <property type="entry name" value="LigD_ligase_dom"/>
</dbReference>
<dbReference type="InterPro" id="IPR014144">
    <property type="entry name" value="LigD_PE_domain"/>
</dbReference>
<dbReference type="InterPro" id="IPR014145">
    <property type="entry name" value="LigD_pol_dom"/>
</dbReference>
<dbReference type="InterPro" id="IPR033649">
    <property type="entry name" value="MtLigD_Pol-like"/>
</dbReference>
<dbReference type="InterPro" id="IPR012340">
    <property type="entry name" value="NA-bd_OB-fold"/>
</dbReference>
<dbReference type="InterPro" id="IPR052171">
    <property type="entry name" value="NHEJ_LigD"/>
</dbReference>
<dbReference type="NCBIfam" id="TIGR02777">
    <property type="entry name" value="LigD_PE_dom"/>
    <property type="match status" value="1"/>
</dbReference>
<dbReference type="NCBIfam" id="TIGR02778">
    <property type="entry name" value="ligD_pol"/>
    <property type="match status" value="1"/>
</dbReference>
<dbReference type="NCBIfam" id="TIGR02779">
    <property type="entry name" value="NHEJ_ligase_lig"/>
    <property type="match status" value="1"/>
</dbReference>
<dbReference type="NCBIfam" id="NF007210">
    <property type="entry name" value="PRK09632.1"/>
    <property type="match status" value="1"/>
</dbReference>
<dbReference type="PANTHER" id="PTHR42705">
    <property type="entry name" value="BIFUNCTIONAL NON-HOMOLOGOUS END JOINING PROTEIN LIGD"/>
    <property type="match status" value="1"/>
</dbReference>
<dbReference type="PANTHER" id="PTHR42705:SF2">
    <property type="entry name" value="BIFUNCTIONAL NON-HOMOLOGOUS END JOINING PROTEIN LIGD"/>
    <property type="match status" value="1"/>
</dbReference>
<dbReference type="Pfam" id="PF04679">
    <property type="entry name" value="DNA_ligase_A_C"/>
    <property type="match status" value="1"/>
</dbReference>
<dbReference type="Pfam" id="PF01068">
    <property type="entry name" value="DNA_ligase_A_M"/>
    <property type="match status" value="1"/>
</dbReference>
<dbReference type="Pfam" id="PF13298">
    <property type="entry name" value="LigD_N"/>
    <property type="match status" value="1"/>
</dbReference>
<dbReference type="Pfam" id="PF21686">
    <property type="entry name" value="LigD_Prim-Pol"/>
    <property type="match status" value="1"/>
</dbReference>
<dbReference type="SUPFAM" id="SSF56091">
    <property type="entry name" value="DNA ligase/mRNA capping enzyme, catalytic domain"/>
    <property type="match status" value="1"/>
</dbReference>
<dbReference type="SUPFAM" id="SSF50249">
    <property type="entry name" value="Nucleic acid-binding proteins"/>
    <property type="match status" value="1"/>
</dbReference>
<dbReference type="PROSITE" id="PS50160">
    <property type="entry name" value="DNA_LIGASE_A3"/>
    <property type="match status" value="1"/>
</dbReference>
<evidence type="ECO:0000250" key="1"/>
<evidence type="ECO:0000256" key="2">
    <source>
        <dbReference type="SAM" id="MobiDB-lite"/>
    </source>
</evidence>
<evidence type="ECO:0000269" key="3">
    <source>
    </source>
</evidence>
<evidence type="ECO:0000269" key="4">
    <source>
    </source>
</evidence>
<evidence type="ECO:0000269" key="5">
    <source>
    </source>
</evidence>
<evidence type="ECO:0000269" key="6">
    <source>
    </source>
</evidence>
<evidence type="ECO:0000269" key="7">
    <source>
    </source>
</evidence>
<evidence type="ECO:0000269" key="8">
    <source>
    </source>
</evidence>
<evidence type="ECO:0000269" key="9">
    <source>
    </source>
</evidence>
<evidence type="ECO:0000269" key="10">
    <source>
    </source>
</evidence>
<evidence type="ECO:0000269" key="11">
    <source>
    </source>
</evidence>
<evidence type="ECO:0000269" key="12">
    <source>
    </source>
</evidence>
<evidence type="ECO:0000269" key="13">
    <source>
    </source>
</evidence>
<evidence type="ECO:0000305" key="14"/>
<evidence type="ECO:0000305" key="15">
    <source>
    </source>
</evidence>
<evidence type="ECO:0000305" key="16">
    <source>
    </source>
</evidence>
<evidence type="ECO:0000305" key="17">
    <source>
    </source>
</evidence>
<evidence type="ECO:0000305" key="18">
    <source>
    </source>
</evidence>
<evidence type="ECO:0000305" key="19">
    <source>
    </source>
</evidence>
<evidence type="ECO:0007829" key="20">
    <source>
        <dbReference type="PDB" id="1VS0"/>
    </source>
</evidence>
<evidence type="ECO:0007829" key="21">
    <source>
        <dbReference type="PDB" id="2IRU"/>
    </source>
</evidence>
<evidence type="ECO:0007829" key="22">
    <source>
        <dbReference type="PDB" id="4MKY"/>
    </source>
</evidence>
<gene>
    <name type="primary">ligD</name>
    <name type="ordered locus">Rv0938</name>
    <name type="ORF">MTCY08D9.01c</name>
    <name type="ORF">MTCY10D7.36c</name>
</gene>